<accession>B2S9C4</accession>
<organism>
    <name type="scientific">Brucella abortus (strain S19)</name>
    <dbReference type="NCBI Taxonomy" id="430066"/>
    <lineage>
        <taxon>Bacteria</taxon>
        <taxon>Pseudomonadati</taxon>
        <taxon>Pseudomonadota</taxon>
        <taxon>Alphaproteobacteria</taxon>
        <taxon>Hyphomicrobiales</taxon>
        <taxon>Brucellaceae</taxon>
        <taxon>Brucella/Ochrobactrum group</taxon>
        <taxon>Brucella</taxon>
    </lineage>
</organism>
<dbReference type="EC" id="4.1.1.23" evidence="1"/>
<dbReference type="EMBL" id="CP000887">
    <property type="protein sequence ID" value="ACD73476.1"/>
    <property type="molecule type" value="Genomic_DNA"/>
</dbReference>
<dbReference type="RefSeq" id="WP_002965193.1">
    <property type="nucleotide sequence ID" value="NC_010742.1"/>
</dbReference>
<dbReference type="SMR" id="B2S9C4"/>
<dbReference type="GeneID" id="93017565"/>
<dbReference type="KEGG" id="bmc:BAbS19_I19940"/>
<dbReference type="HOGENOM" id="CLU_067069_1_0_5"/>
<dbReference type="UniPathway" id="UPA00070">
    <property type="reaction ID" value="UER00120"/>
</dbReference>
<dbReference type="Proteomes" id="UP000002565">
    <property type="component" value="Chromosome 1"/>
</dbReference>
<dbReference type="GO" id="GO:0005829">
    <property type="term" value="C:cytosol"/>
    <property type="evidence" value="ECO:0007669"/>
    <property type="project" value="TreeGrafter"/>
</dbReference>
<dbReference type="GO" id="GO:0004590">
    <property type="term" value="F:orotidine-5'-phosphate decarboxylase activity"/>
    <property type="evidence" value="ECO:0007669"/>
    <property type="project" value="UniProtKB-UniRule"/>
</dbReference>
<dbReference type="GO" id="GO:0006207">
    <property type="term" value="P:'de novo' pyrimidine nucleobase biosynthetic process"/>
    <property type="evidence" value="ECO:0007669"/>
    <property type="project" value="InterPro"/>
</dbReference>
<dbReference type="GO" id="GO:0044205">
    <property type="term" value="P:'de novo' UMP biosynthetic process"/>
    <property type="evidence" value="ECO:0007669"/>
    <property type="project" value="UniProtKB-UniRule"/>
</dbReference>
<dbReference type="CDD" id="cd04725">
    <property type="entry name" value="OMP_decarboxylase_like"/>
    <property type="match status" value="1"/>
</dbReference>
<dbReference type="Gene3D" id="3.20.20.70">
    <property type="entry name" value="Aldolase class I"/>
    <property type="match status" value="1"/>
</dbReference>
<dbReference type="HAMAP" id="MF_01200_B">
    <property type="entry name" value="OMPdecase_type1_B"/>
    <property type="match status" value="1"/>
</dbReference>
<dbReference type="InterPro" id="IPR013785">
    <property type="entry name" value="Aldolase_TIM"/>
</dbReference>
<dbReference type="InterPro" id="IPR014732">
    <property type="entry name" value="OMPdecase"/>
</dbReference>
<dbReference type="InterPro" id="IPR018089">
    <property type="entry name" value="OMPdecase_AS"/>
</dbReference>
<dbReference type="InterPro" id="IPR047596">
    <property type="entry name" value="OMPdecase_bac"/>
</dbReference>
<dbReference type="InterPro" id="IPR001754">
    <property type="entry name" value="OMPdeCOase_dom"/>
</dbReference>
<dbReference type="InterPro" id="IPR011060">
    <property type="entry name" value="RibuloseP-bd_barrel"/>
</dbReference>
<dbReference type="NCBIfam" id="NF001273">
    <property type="entry name" value="PRK00230.1"/>
    <property type="match status" value="1"/>
</dbReference>
<dbReference type="NCBIfam" id="TIGR01740">
    <property type="entry name" value="pyrF"/>
    <property type="match status" value="1"/>
</dbReference>
<dbReference type="PANTHER" id="PTHR32119">
    <property type="entry name" value="OROTIDINE 5'-PHOSPHATE DECARBOXYLASE"/>
    <property type="match status" value="1"/>
</dbReference>
<dbReference type="PANTHER" id="PTHR32119:SF2">
    <property type="entry name" value="OROTIDINE 5'-PHOSPHATE DECARBOXYLASE"/>
    <property type="match status" value="1"/>
</dbReference>
<dbReference type="Pfam" id="PF00215">
    <property type="entry name" value="OMPdecase"/>
    <property type="match status" value="1"/>
</dbReference>
<dbReference type="SMART" id="SM00934">
    <property type="entry name" value="OMPdecase"/>
    <property type="match status" value="1"/>
</dbReference>
<dbReference type="SUPFAM" id="SSF51366">
    <property type="entry name" value="Ribulose-phoshate binding barrel"/>
    <property type="match status" value="1"/>
</dbReference>
<dbReference type="PROSITE" id="PS00156">
    <property type="entry name" value="OMPDECASE"/>
    <property type="match status" value="1"/>
</dbReference>
<feature type="chain" id="PRO_1000138516" description="Orotidine 5'-phosphate decarboxylase">
    <location>
        <begin position="1"/>
        <end position="238"/>
    </location>
</feature>
<feature type="active site" description="Proton donor" evidence="1">
    <location>
        <position position="69"/>
    </location>
</feature>
<feature type="binding site" evidence="1">
    <location>
        <position position="18"/>
    </location>
    <ligand>
        <name>substrate</name>
    </ligand>
</feature>
<feature type="binding site" evidence="1">
    <location>
        <position position="40"/>
    </location>
    <ligand>
        <name>substrate</name>
    </ligand>
</feature>
<feature type="binding site" evidence="1">
    <location>
        <begin position="67"/>
        <end position="76"/>
    </location>
    <ligand>
        <name>substrate</name>
    </ligand>
</feature>
<feature type="binding site" evidence="1">
    <location>
        <position position="122"/>
    </location>
    <ligand>
        <name>substrate</name>
    </ligand>
</feature>
<feature type="binding site" evidence="1">
    <location>
        <position position="183"/>
    </location>
    <ligand>
        <name>substrate</name>
    </ligand>
</feature>
<feature type="binding site" evidence="1">
    <location>
        <position position="192"/>
    </location>
    <ligand>
        <name>substrate</name>
    </ligand>
</feature>
<feature type="binding site" evidence="1">
    <location>
        <position position="213"/>
    </location>
    <ligand>
        <name>substrate</name>
    </ligand>
</feature>
<proteinExistence type="inferred from homology"/>
<sequence length="238" mass="25193">MTTELHDDASGRLIVGLDVPTIAEAEKVVEELGNAVSFYKIGYQLVFAGGLDFAKSLVAARKKVFLDMKLLDIDNTIAKGVENVAKMGVSMLTLHAYPKAMRAAVEAARGSDLCLLGVTVLTSMDNADLREAGYFDNAETLVLKRARQAHEAGMGGIVASAVEAQAIRQAVRPDMAIVTPGIRPAGSEKGDQKRVMTPADALRAGASHLIVARPIVGAPDRKAAALAILKEMRSIGRS</sequence>
<evidence type="ECO:0000255" key="1">
    <source>
        <dbReference type="HAMAP-Rule" id="MF_01200"/>
    </source>
</evidence>
<comment type="function">
    <text evidence="1">Catalyzes the decarboxylation of orotidine 5'-monophosphate (OMP) to uridine 5'-monophosphate (UMP).</text>
</comment>
<comment type="catalytic activity">
    <reaction evidence="1">
        <text>orotidine 5'-phosphate + H(+) = UMP + CO2</text>
        <dbReference type="Rhea" id="RHEA:11596"/>
        <dbReference type="ChEBI" id="CHEBI:15378"/>
        <dbReference type="ChEBI" id="CHEBI:16526"/>
        <dbReference type="ChEBI" id="CHEBI:57538"/>
        <dbReference type="ChEBI" id="CHEBI:57865"/>
        <dbReference type="EC" id="4.1.1.23"/>
    </reaction>
</comment>
<comment type="pathway">
    <text evidence="1">Pyrimidine metabolism; UMP biosynthesis via de novo pathway; UMP from orotate: step 2/2.</text>
</comment>
<comment type="subunit">
    <text evidence="1">Homodimer.</text>
</comment>
<comment type="similarity">
    <text evidence="1">Belongs to the OMP decarboxylase family. Type 1 subfamily.</text>
</comment>
<reference key="1">
    <citation type="journal article" date="2008" name="PLoS ONE">
        <title>Genome sequence of Brucella abortus vaccine strain S19 compared to virulent strains yields candidate virulence genes.</title>
        <authorList>
            <person name="Crasta O.R."/>
            <person name="Folkerts O."/>
            <person name="Fei Z."/>
            <person name="Mane S.P."/>
            <person name="Evans C."/>
            <person name="Martino-Catt S."/>
            <person name="Bricker B."/>
            <person name="Yu G."/>
            <person name="Du L."/>
            <person name="Sobral B.W."/>
        </authorList>
    </citation>
    <scope>NUCLEOTIDE SEQUENCE [LARGE SCALE GENOMIC DNA]</scope>
    <source>
        <strain>S19</strain>
    </source>
</reference>
<protein>
    <recommendedName>
        <fullName evidence="1">Orotidine 5'-phosphate decarboxylase</fullName>
        <ecNumber evidence="1">4.1.1.23</ecNumber>
    </recommendedName>
    <alternativeName>
        <fullName evidence="1">OMP decarboxylase</fullName>
        <shortName evidence="1">OMPDCase</shortName>
        <shortName evidence="1">OMPdecase</shortName>
    </alternativeName>
</protein>
<name>PYRF_BRUA1</name>
<gene>
    <name evidence="1" type="primary">pyrF</name>
    <name type="ordered locus">BAbS19_I19940</name>
</gene>
<keyword id="KW-0210">Decarboxylase</keyword>
<keyword id="KW-0456">Lyase</keyword>
<keyword id="KW-0665">Pyrimidine biosynthesis</keyword>